<gene>
    <name evidence="1" type="primary">lpxH</name>
    <name type="ordered locus">YpsIP31758_3016</name>
</gene>
<keyword id="KW-0997">Cell inner membrane</keyword>
<keyword id="KW-1003">Cell membrane</keyword>
<keyword id="KW-0378">Hydrolase</keyword>
<keyword id="KW-0441">Lipid A biosynthesis</keyword>
<keyword id="KW-0444">Lipid biosynthesis</keyword>
<keyword id="KW-0443">Lipid metabolism</keyword>
<keyword id="KW-0464">Manganese</keyword>
<keyword id="KW-0472">Membrane</keyword>
<keyword id="KW-0479">Metal-binding</keyword>
<feature type="chain" id="PRO_1000061176" description="UDP-2,3-diacylglucosamine hydrolase">
    <location>
        <begin position="1"/>
        <end position="240"/>
    </location>
</feature>
<feature type="binding site" evidence="1">
    <location>
        <position position="8"/>
    </location>
    <ligand>
        <name>Mn(2+)</name>
        <dbReference type="ChEBI" id="CHEBI:29035"/>
        <label>1</label>
    </ligand>
</feature>
<feature type="binding site" evidence="1">
    <location>
        <position position="10"/>
    </location>
    <ligand>
        <name>Mn(2+)</name>
        <dbReference type="ChEBI" id="CHEBI:29035"/>
        <label>1</label>
    </ligand>
</feature>
<feature type="binding site" evidence="1">
    <location>
        <position position="41"/>
    </location>
    <ligand>
        <name>Mn(2+)</name>
        <dbReference type="ChEBI" id="CHEBI:29035"/>
        <label>1</label>
    </ligand>
</feature>
<feature type="binding site" evidence="1">
    <location>
        <position position="41"/>
    </location>
    <ligand>
        <name>Mn(2+)</name>
        <dbReference type="ChEBI" id="CHEBI:29035"/>
        <label>2</label>
    </ligand>
</feature>
<feature type="binding site" evidence="1">
    <location>
        <begin position="79"/>
        <end position="80"/>
    </location>
    <ligand>
        <name>substrate</name>
    </ligand>
</feature>
<feature type="binding site" evidence="1">
    <location>
        <position position="79"/>
    </location>
    <ligand>
        <name>Mn(2+)</name>
        <dbReference type="ChEBI" id="CHEBI:29035"/>
        <label>2</label>
    </ligand>
</feature>
<feature type="binding site" evidence="1">
    <location>
        <position position="114"/>
    </location>
    <ligand>
        <name>Mn(2+)</name>
        <dbReference type="ChEBI" id="CHEBI:29035"/>
        <label>2</label>
    </ligand>
</feature>
<feature type="binding site" evidence="1">
    <location>
        <position position="122"/>
    </location>
    <ligand>
        <name>substrate</name>
    </ligand>
</feature>
<feature type="binding site" evidence="1">
    <location>
        <position position="160"/>
    </location>
    <ligand>
        <name>substrate</name>
    </ligand>
</feature>
<feature type="binding site" evidence="1">
    <location>
        <position position="164"/>
    </location>
    <ligand>
        <name>substrate</name>
    </ligand>
</feature>
<feature type="binding site" evidence="1">
    <location>
        <position position="167"/>
    </location>
    <ligand>
        <name>substrate</name>
    </ligand>
</feature>
<feature type="binding site" evidence="1">
    <location>
        <position position="195"/>
    </location>
    <ligand>
        <name>Mn(2+)</name>
        <dbReference type="ChEBI" id="CHEBI:29035"/>
        <label>2</label>
    </ligand>
</feature>
<feature type="binding site" evidence="1">
    <location>
        <position position="195"/>
    </location>
    <ligand>
        <name>substrate</name>
    </ligand>
</feature>
<feature type="binding site" evidence="1">
    <location>
        <position position="197"/>
    </location>
    <ligand>
        <name>Mn(2+)</name>
        <dbReference type="ChEBI" id="CHEBI:29035"/>
        <label>1</label>
    </ligand>
</feature>
<organism>
    <name type="scientific">Yersinia pseudotuberculosis serotype O:1b (strain IP 31758)</name>
    <dbReference type="NCBI Taxonomy" id="349747"/>
    <lineage>
        <taxon>Bacteria</taxon>
        <taxon>Pseudomonadati</taxon>
        <taxon>Pseudomonadota</taxon>
        <taxon>Gammaproteobacteria</taxon>
        <taxon>Enterobacterales</taxon>
        <taxon>Yersiniaceae</taxon>
        <taxon>Yersinia</taxon>
    </lineage>
</organism>
<protein>
    <recommendedName>
        <fullName evidence="1">UDP-2,3-diacylglucosamine hydrolase</fullName>
        <ecNumber evidence="1">3.6.1.54</ecNumber>
    </recommendedName>
    <alternativeName>
        <fullName evidence="1">UDP-2,3-diacylglucosamine diphosphatase</fullName>
    </alternativeName>
</protein>
<proteinExistence type="inferred from homology"/>
<accession>A7FL48</accession>
<sequence length="240" mass="27425">MSTLFIADLHLSVQEPAITAGFLHFIQREAIHADALYILGDLFESWIGDDDPEPLYRQVAAALKSLQQQGVPCYFIHGNRDFLLGKRFAEESGMVLLPEENVVELYGRKILILHGDTLCTDDTDYQHFRKKVHNPLIQKLFLWIPLRLRLRIAAYMRNKSQQNNSGKSEHIMDVNSKAVIDAFLRHDVSWMIHGHTHRPAIHSVELPMVTAHRVVLGAWHVEGSMVKVTADNVELITFPF</sequence>
<name>LPXH_YERP3</name>
<reference key="1">
    <citation type="journal article" date="2007" name="PLoS Genet.">
        <title>The complete genome sequence of Yersinia pseudotuberculosis IP31758, the causative agent of Far East scarlet-like fever.</title>
        <authorList>
            <person name="Eppinger M."/>
            <person name="Rosovitz M.J."/>
            <person name="Fricke W.F."/>
            <person name="Rasko D.A."/>
            <person name="Kokorina G."/>
            <person name="Fayolle C."/>
            <person name="Lindler L.E."/>
            <person name="Carniel E."/>
            <person name="Ravel J."/>
        </authorList>
    </citation>
    <scope>NUCLEOTIDE SEQUENCE [LARGE SCALE GENOMIC DNA]</scope>
    <source>
        <strain>IP 31758</strain>
    </source>
</reference>
<evidence type="ECO:0000255" key="1">
    <source>
        <dbReference type="HAMAP-Rule" id="MF_00575"/>
    </source>
</evidence>
<dbReference type="EC" id="3.6.1.54" evidence="1"/>
<dbReference type="EMBL" id="CP000720">
    <property type="protein sequence ID" value="ABS49105.1"/>
    <property type="molecule type" value="Genomic_DNA"/>
</dbReference>
<dbReference type="RefSeq" id="WP_012105553.1">
    <property type="nucleotide sequence ID" value="NC_009708.1"/>
</dbReference>
<dbReference type="SMR" id="A7FL48"/>
<dbReference type="KEGG" id="ypi:YpsIP31758_3016"/>
<dbReference type="HOGENOM" id="CLU_074586_0_0_6"/>
<dbReference type="UniPathway" id="UPA00359">
    <property type="reaction ID" value="UER00480"/>
</dbReference>
<dbReference type="Proteomes" id="UP000002412">
    <property type="component" value="Chromosome"/>
</dbReference>
<dbReference type="GO" id="GO:0005737">
    <property type="term" value="C:cytoplasm"/>
    <property type="evidence" value="ECO:0007669"/>
    <property type="project" value="InterPro"/>
</dbReference>
<dbReference type="GO" id="GO:0019897">
    <property type="term" value="C:extrinsic component of plasma membrane"/>
    <property type="evidence" value="ECO:0007669"/>
    <property type="project" value="UniProtKB-UniRule"/>
</dbReference>
<dbReference type="GO" id="GO:0030145">
    <property type="term" value="F:manganese ion binding"/>
    <property type="evidence" value="ECO:0007669"/>
    <property type="project" value="UniProtKB-UniRule"/>
</dbReference>
<dbReference type="GO" id="GO:0008758">
    <property type="term" value="F:UDP-2,3-diacylglucosamine hydrolase activity"/>
    <property type="evidence" value="ECO:0007669"/>
    <property type="project" value="UniProtKB-UniRule"/>
</dbReference>
<dbReference type="GO" id="GO:0009245">
    <property type="term" value="P:lipid A biosynthetic process"/>
    <property type="evidence" value="ECO:0007669"/>
    <property type="project" value="UniProtKB-UniRule"/>
</dbReference>
<dbReference type="CDD" id="cd07398">
    <property type="entry name" value="MPP_YbbF-LpxH"/>
    <property type="match status" value="1"/>
</dbReference>
<dbReference type="FunFam" id="3.60.21.10:FF:000074">
    <property type="entry name" value="UDP-2,3-diacylglucosamine hydrolase"/>
    <property type="match status" value="1"/>
</dbReference>
<dbReference type="Gene3D" id="3.60.21.10">
    <property type="match status" value="1"/>
</dbReference>
<dbReference type="HAMAP" id="MF_00575">
    <property type="entry name" value="LpxH"/>
    <property type="match status" value="1"/>
</dbReference>
<dbReference type="InterPro" id="IPR004843">
    <property type="entry name" value="Calcineurin-like_PHP_ApaH"/>
</dbReference>
<dbReference type="InterPro" id="IPR043461">
    <property type="entry name" value="LpxH-like"/>
</dbReference>
<dbReference type="InterPro" id="IPR029052">
    <property type="entry name" value="Metallo-depent_PP-like"/>
</dbReference>
<dbReference type="InterPro" id="IPR010138">
    <property type="entry name" value="UDP-diacylglucosamine_Hdrlase"/>
</dbReference>
<dbReference type="NCBIfam" id="TIGR01854">
    <property type="entry name" value="lipid_A_lpxH"/>
    <property type="match status" value="1"/>
</dbReference>
<dbReference type="NCBIfam" id="NF003743">
    <property type="entry name" value="PRK05340.1"/>
    <property type="match status" value="1"/>
</dbReference>
<dbReference type="PANTHER" id="PTHR34990:SF1">
    <property type="entry name" value="UDP-2,3-DIACYLGLUCOSAMINE HYDROLASE"/>
    <property type="match status" value="1"/>
</dbReference>
<dbReference type="PANTHER" id="PTHR34990">
    <property type="entry name" value="UDP-2,3-DIACYLGLUCOSAMINE HYDROLASE-RELATED"/>
    <property type="match status" value="1"/>
</dbReference>
<dbReference type="Pfam" id="PF00149">
    <property type="entry name" value="Metallophos"/>
    <property type="match status" value="1"/>
</dbReference>
<dbReference type="SUPFAM" id="SSF56300">
    <property type="entry name" value="Metallo-dependent phosphatases"/>
    <property type="match status" value="1"/>
</dbReference>
<comment type="function">
    <text evidence="1">Hydrolyzes the pyrophosphate bond of UDP-2,3-diacylglucosamine to yield 2,3-diacylglucosamine 1-phosphate (lipid X) and UMP by catalyzing the attack of water at the alpha-P atom. Involved in the biosynthesis of lipid A, a phosphorylated glycolipid that anchors the lipopolysaccharide to the outer membrane of the cell.</text>
</comment>
<comment type="catalytic activity">
    <reaction evidence="1">
        <text>UDP-2-N,3-O-bis[(3R)-3-hydroxytetradecanoyl]-alpha-D-glucosamine + H2O = 2-N,3-O-bis[(3R)-3-hydroxytetradecanoyl]-alpha-D-glucosaminyl 1-phosphate + UMP + 2 H(+)</text>
        <dbReference type="Rhea" id="RHEA:25213"/>
        <dbReference type="ChEBI" id="CHEBI:15377"/>
        <dbReference type="ChEBI" id="CHEBI:15378"/>
        <dbReference type="ChEBI" id="CHEBI:57865"/>
        <dbReference type="ChEBI" id="CHEBI:57957"/>
        <dbReference type="ChEBI" id="CHEBI:78847"/>
        <dbReference type="EC" id="3.6.1.54"/>
    </reaction>
</comment>
<comment type="cofactor">
    <cofactor evidence="1">
        <name>Mn(2+)</name>
        <dbReference type="ChEBI" id="CHEBI:29035"/>
    </cofactor>
    <text evidence="1">Binds 2 Mn(2+) ions per subunit in a binuclear metal center.</text>
</comment>
<comment type="pathway">
    <text evidence="1">Glycolipid biosynthesis; lipid IV(A) biosynthesis; lipid IV(A) from (3R)-3-hydroxytetradecanoyl-[acyl-carrier-protein] and UDP-N-acetyl-alpha-D-glucosamine: step 4/6.</text>
</comment>
<comment type="subcellular location">
    <subcellularLocation>
        <location evidence="1">Cell inner membrane</location>
        <topology evidence="1">Peripheral membrane protein</topology>
        <orientation evidence="1">Cytoplasmic side</orientation>
    </subcellularLocation>
</comment>
<comment type="similarity">
    <text evidence="1">Belongs to the LpxH family.</text>
</comment>